<comment type="function">
    <text evidence="1">Catalyzes the attachment of threonine to tRNA(Thr) in a two-step reaction: L-threonine is first activated by ATP to form Thr-AMP and then transferred to the acceptor end of tRNA(Thr). Also edits incorrectly charged L-seryl-tRNA(Thr).</text>
</comment>
<comment type="catalytic activity">
    <reaction evidence="1">
        <text>tRNA(Thr) + L-threonine + ATP = L-threonyl-tRNA(Thr) + AMP + diphosphate + H(+)</text>
        <dbReference type="Rhea" id="RHEA:24624"/>
        <dbReference type="Rhea" id="RHEA-COMP:9670"/>
        <dbReference type="Rhea" id="RHEA-COMP:9704"/>
        <dbReference type="ChEBI" id="CHEBI:15378"/>
        <dbReference type="ChEBI" id="CHEBI:30616"/>
        <dbReference type="ChEBI" id="CHEBI:33019"/>
        <dbReference type="ChEBI" id="CHEBI:57926"/>
        <dbReference type="ChEBI" id="CHEBI:78442"/>
        <dbReference type="ChEBI" id="CHEBI:78534"/>
        <dbReference type="ChEBI" id="CHEBI:456215"/>
        <dbReference type="EC" id="6.1.1.3"/>
    </reaction>
</comment>
<comment type="cofactor">
    <cofactor evidence="1">
        <name>Zn(2+)</name>
        <dbReference type="ChEBI" id="CHEBI:29105"/>
    </cofactor>
    <text evidence="1">Binds 1 zinc ion per subunit.</text>
</comment>
<comment type="subunit">
    <text evidence="1">Homodimer.</text>
</comment>
<comment type="subcellular location">
    <subcellularLocation>
        <location evidence="1">Cytoplasm</location>
    </subcellularLocation>
</comment>
<comment type="similarity">
    <text evidence="1">Belongs to the class-II aminoacyl-tRNA synthetase family.</text>
</comment>
<keyword id="KW-0030">Aminoacyl-tRNA synthetase</keyword>
<keyword id="KW-0067">ATP-binding</keyword>
<keyword id="KW-0963">Cytoplasm</keyword>
<keyword id="KW-0436">Ligase</keyword>
<keyword id="KW-0479">Metal-binding</keyword>
<keyword id="KW-0547">Nucleotide-binding</keyword>
<keyword id="KW-0648">Protein biosynthesis</keyword>
<keyword id="KW-1185">Reference proteome</keyword>
<keyword id="KW-0694">RNA-binding</keyword>
<keyword id="KW-0820">tRNA-binding</keyword>
<keyword id="KW-0862">Zinc</keyword>
<dbReference type="EC" id="6.1.1.3" evidence="1"/>
<dbReference type="EMBL" id="AL111168">
    <property type="protein sequence ID" value="CAL34375.1"/>
    <property type="molecule type" value="Genomic_DNA"/>
</dbReference>
<dbReference type="PIR" id="E81439">
    <property type="entry name" value="E81439"/>
</dbReference>
<dbReference type="RefSeq" id="WP_002858701.1">
    <property type="nucleotide sequence ID" value="NZ_SZUC01000006.1"/>
</dbReference>
<dbReference type="RefSeq" id="YP_002343664.1">
    <property type="nucleotide sequence ID" value="NC_002163.1"/>
</dbReference>
<dbReference type="SMR" id="Q9PIS3"/>
<dbReference type="IntAct" id="Q9PIS3">
    <property type="interactions" value="5"/>
</dbReference>
<dbReference type="STRING" id="192222.Cj0206"/>
<dbReference type="PaxDb" id="192222-Cj0206"/>
<dbReference type="EnsemblBacteria" id="CAL34375">
    <property type="protein sequence ID" value="CAL34375"/>
    <property type="gene ID" value="Cj0206"/>
</dbReference>
<dbReference type="GeneID" id="904952"/>
<dbReference type="KEGG" id="cje:Cj0206"/>
<dbReference type="PATRIC" id="fig|192222.6.peg.203"/>
<dbReference type="eggNOG" id="COG0441">
    <property type="taxonomic scope" value="Bacteria"/>
</dbReference>
<dbReference type="HOGENOM" id="CLU_008554_0_1_7"/>
<dbReference type="OrthoDB" id="9802304at2"/>
<dbReference type="Proteomes" id="UP000000799">
    <property type="component" value="Chromosome"/>
</dbReference>
<dbReference type="GO" id="GO:0005829">
    <property type="term" value="C:cytosol"/>
    <property type="evidence" value="ECO:0007669"/>
    <property type="project" value="TreeGrafter"/>
</dbReference>
<dbReference type="GO" id="GO:0005524">
    <property type="term" value="F:ATP binding"/>
    <property type="evidence" value="ECO:0007669"/>
    <property type="project" value="UniProtKB-UniRule"/>
</dbReference>
<dbReference type="GO" id="GO:0046872">
    <property type="term" value="F:metal ion binding"/>
    <property type="evidence" value="ECO:0007669"/>
    <property type="project" value="UniProtKB-KW"/>
</dbReference>
<dbReference type="GO" id="GO:0004829">
    <property type="term" value="F:threonine-tRNA ligase activity"/>
    <property type="evidence" value="ECO:0007669"/>
    <property type="project" value="UniProtKB-UniRule"/>
</dbReference>
<dbReference type="GO" id="GO:0000049">
    <property type="term" value="F:tRNA binding"/>
    <property type="evidence" value="ECO:0007669"/>
    <property type="project" value="UniProtKB-KW"/>
</dbReference>
<dbReference type="GO" id="GO:0006435">
    <property type="term" value="P:threonyl-tRNA aminoacylation"/>
    <property type="evidence" value="ECO:0007669"/>
    <property type="project" value="UniProtKB-UniRule"/>
</dbReference>
<dbReference type="CDD" id="cd00860">
    <property type="entry name" value="ThrRS_anticodon"/>
    <property type="match status" value="1"/>
</dbReference>
<dbReference type="CDD" id="cd00771">
    <property type="entry name" value="ThrRS_core"/>
    <property type="match status" value="1"/>
</dbReference>
<dbReference type="FunFam" id="3.30.930.10:FF:000019">
    <property type="entry name" value="Threonine--tRNA ligase"/>
    <property type="match status" value="1"/>
</dbReference>
<dbReference type="FunFam" id="3.30.980.10:FF:000005">
    <property type="entry name" value="Threonyl-tRNA synthetase, mitochondrial"/>
    <property type="match status" value="1"/>
</dbReference>
<dbReference type="Gene3D" id="3.30.54.20">
    <property type="match status" value="1"/>
</dbReference>
<dbReference type="Gene3D" id="3.40.50.800">
    <property type="entry name" value="Anticodon-binding domain"/>
    <property type="match status" value="1"/>
</dbReference>
<dbReference type="Gene3D" id="3.30.930.10">
    <property type="entry name" value="Bira Bifunctional Protein, Domain 2"/>
    <property type="match status" value="1"/>
</dbReference>
<dbReference type="Gene3D" id="3.30.980.10">
    <property type="entry name" value="Threonyl-trna Synthetase, Chain A, domain 2"/>
    <property type="match status" value="1"/>
</dbReference>
<dbReference type="HAMAP" id="MF_00184">
    <property type="entry name" value="Thr_tRNA_synth"/>
    <property type="match status" value="1"/>
</dbReference>
<dbReference type="InterPro" id="IPR002314">
    <property type="entry name" value="aa-tRNA-synt_IIb"/>
</dbReference>
<dbReference type="InterPro" id="IPR006195">
    <property type="entry name" value="aa-tRNA-synth_II"/>
</dbReference>
<dbReference type="InterPro" id="IPR045864">
    <property type="entry name" value="aa-tRNA-synth_II/BPL/LPL"/>
</dbReference>
<dbReference type="InterPro" id="IPR004154">
    <property type="entry name" value="Anticodon-bd"/>
</dbReference>
<dbReference type="InterPro" id="IPR036621">
    <property type="entry name" value="Anticodon-bd_dom_sf"/>
</dbReference>
<dbReference type="InterPro" id="IPR002320">
    <property type="entry name" value="Thr-tRNA-ligase_IIa"/>
</dbReference>
<dbReference type="InterPro" id="IPR018163">
    <property type="entry name" value="Thr/Ala-tRNA-synth_IIc_edit"/>
</dbReference>
<dbReference type="InterPro" id="IPR047246">
    <property type="entry name" value="ThrRS_anticodon"/>
</dbReference>
<dbReference type="InterPro" id="IPR033728">
    <property type="entry name" value="ThrRS_core"/>
</dbReference>
<dbReference type="InterPro" id="IPR012947">
    <property type="entry name" value="tRNA_SAD"/>
</dbReference>
<dbReference type="NCBIfam" id="TIGR00418">
    <property type="entry name" value="thrS"/>
    <property type="match status" value="1"/>
</dbReference>
<dbReference type="PANTHER" id="PTHR11451:SF44">
    <property type="entry name" value="THREONINE--TRNA LIGASE, CHLOROPLASTIC_MITOCHONDRIAL 2"/>
    <property type="match status" value="1"/>
</dbReference>
<dbReference type="PANTHER" id="PTHR11451">
    <property type="entry name" value="THREONINE-TRNA LIGASE"/>
    <property type="match status" value="1"/>
</dbReference>
<dbReference type="Pfam" id="PF03129">
    <property type="entry name" value="HGTP_anticodon"/>
    <property type="match status" value="1"/>
</dbReference>
<dbReference type="Pfam" id="PF00587">
    <property type="entry name" value="tRNA-synt_2b"/>
    <property type="match status" value="1"/>
</dbReference>
<dbReference type="Pfam" id="PF07973">
    <property type="entry name" value="tRNA_SAD"/>
    <property type="match status" value="1"/>
</dbReference>
<dbReference type="PRINTS" id="PR01047">
    <property type="entry name" value="TRNASYNTHTHR"/>
</dbReference>
<dbReference type="SMART" id="SM00863">
    <property type="entry name" value="tRNA_SAD"/>
    <property type="match status" value="1"/>
</dbReference>
<dbReference type="SUPFAM" id="SSF52954">
    <property type="entry name" value="Class II aaRS ABD-related"/>
    <property type="match status" value="1"/>
</dbReference>
<dbReference type="SUPFAM" id="SSF55681">
    <property type="entry name" value="Class II aaRS and biotin synthetases"/>
    <property type="match status" value="1"/>
</dbReference>
<dbReference type="SUPFAM" id="SSF55186">
    <property type="entry name" value="ThrRS/AlaRS common domain"/>
    <property type="match status" value="1"/>
</dbReference>
<dbReference type="PROSITE" id="PS50862">
    <property type="entry name" value="AA_TRNA_LIGASE_II"/>
    <property type="match status" value="1"/>
</dbReference>
<name>SYT_CAMJE</name>
<proteinExistence type="inferred from homology"/>
<organism>
    <name type="scientific">Campylobacter jejuni subsp. jejuni serotype O:2 (strain ATCC 700819 / NCTC 11168)</name>
    <dbReference type="NCBI Taxonomy" id="192222"/>
    <lineage>
        <taxon>Bacteria</taxon>
        <taxon>Pseudomonadati</taxon>
        <taxon>Campylobacterota</taxon>
        <taxon>Epsilonproteobacteria</taxon>
        <taxon>Campylobacterales</taxon>
        <taxon>Campylobacteraceae</taxon>
        <taxon>Campylobacter</taxon>
    </lineage>
</organism>
<evidence type="ECO:0000255" key="1">
    <source>
        <dbReference type="HAMAP-Rule" id="MF_00184"/>
    </source>
</evidence>
<sequence length="602" mass="69614">MEKEVIAYLDNETIIDSQSVKNTNLKEIYFDNSKESLEVIRHSCAHLMAQAIKSLYPEAKFFVGPVIEDGFYYDFRVESKIGEEDLVKIEKKMKELAEAKIEISKYEITKSEALAKFQNDDLKQEVLLRIPDRAVSIYKQGEFEDLCRGPHVPNTKFLRFFKLTRVAGAYLGGDEKREMLTRIYGTAFADKESLKEYLTIIEEAKKRDHRKLGTELKLFTFDDEIGGGLPIWLSNGARLRSKLEHMLYKIHRLRGYEPVRGPELLKADAWKISGHYANYKENMYFTQIDEQEYGIKPMNCVGHIKIYQSDVRSYRDLPLKFFEYGVVHRHEKSGVLHGLFRVREFTQDDAHIFCMPSQIKEQVLEILAFVDNLMKLFDFSYEMEISTKPEKAIGDDEIWEIATKALKEALDEQGLKYGIDEGGGAFYGPKIDIKITDALKRKWQCGTIQVDFNLPSRFKLEYTDSDNEKKQPVMLHRAILGSFERFIGILTEHCAGEFPFFIAPTAVGIVPIGEAHIAYAKEIQKELLELNIDSEVYEKNESLSKKIRIAEKQKLPMILVLGDDEVAKRSVALRDRRAKEQKNLSLDEFIKLVKEKMSEVHF</sequence>
<gene>
    <name evidence="1" type="primary">thrS</name>
    <name type="ordered locus">Cj0206</name>
</gene>
<reference key="1">
    <citation type="journal article" date="2000" name="Nature">
        <title>The genome sequence of the food-borne pathogen Campylobacter jejuni reveals hypervariable sequences.</title>
        <authorList>
            <person name="Parkhill J."/>
            <person name="Wren B.W."/>
            <person name="Mungall K.L."/>
            <person name="Ketley J.M."/>
            <person name="Churcher C.M."/>
            <person name="Basham D."/>
            <person name="Chillingworth T."/>
            <person name="Davies R.M."/>
            <person name="Feltwell T."/>
            <person name="Holroyd S."/>
            <person name="Jagels K."/>
            <person name="Karlyshev A.V."/>
            <person name="Moule S."/>
            <person name="Pallen M.J."/>
            <person name="Penn C.W."/>
            <person name="Quail M.A."/>
            <person name="Rajandream M.A."/>
            <person name="Rutherford K.M."/>
            <person name="van Vliet A.H.M."/>
            <person name="Whitehead S."/>
            <person name="Barrell B.G."/>
        </authorList>
    </citation>
    <scope>NUCLEOTIDE SEQUENCE [LARGE SCALE GENOMIC DNA]</scope>
    <source>
        <strain>ATCC 700819 / NCTC 11168</strain>
    </source>
</reference>
<accession>Q9PIS3</accession>
<accession>Q0PBT3</accession>
<feature type="chain" id="PRO_0000100955" description="Threonine--tRNA ligase">
    <location>
        <begin position="1"/>
        <end position="602"/>
    </location>
</feature>
<feature type="region of interest" description="Catalytic" evidence="1">
    <location>
        <begin position="208"/>
        <end position="499"/>
    </location>
</feature>
<feature type="binding site" evidence="1">
    <location>
        <position position="300"/>
    </location>
    <ligand>
        <name>Zn(2+)</name>
        <dbReference type="ChEBI" id="CHEBI:29105"/>
    </ligand>
</feature>
<feature type="binding site" evidence="1">
    <location>
        <position position="351"/>
    </location>
    <ligand>
        <name>Zn(2+)</name>
        <dbReference type="ChEBI" id="CHEBI:29105"/>
    </ligand>
</feature>
<feature type="binding site" evidence="1">
    <location>
        <position position="476"/>
    </location>
    <ligand>
        <name>Zn(2+)</name>
        <dbReference type="ChEBI" id="CHEBI:29105"/>
    </ligand>
</feature>
<protein>
    <recommendedName>
        <fullName evidence="1">Threonine--tRNA ligase</fullName>
        <ecNumber evidence="1">6.1.1.3</ecNumber>
    </recommendedName>
    <alternativeName>
        <fullName evidence="1">Threonyl-tRNA synthetase</fullName>
        <shortName evidence="1">ThrRS</shortName>
    </alternativeName>
</protein>